<keyword id="KW-0143">Chaperone</keyword>
<keyword id="KW-0963">Cytoplasm</keyword>
<keyword id="KW-0996">Nickel insertion</keyword>
<keyword id="KW-1185">Reference proteome</keyword>
<sequence>MNSLWPLLRLASPQLPIGAYTYSQGLESAIDQGIVWDADSVRLWLSDQLAMNIACFEAPLFARMLEAAAQGQWQQLFYWAEEYVASRETRELYQESRQMGFSLVQLLNDLPELDEAMRHQLLGFVEPPLPLVWAVAARTWNLDTRSAVAAWLWGWLENQLAALMKALPLGQQAAQRLLSQLLPELDEALETALACSDEQLANGTLGLSIASMIHETQYTRLFRS</sequence>
<name>UREF_NITOC</name>
<feature type="chain" id="PRO_0000344139" description="Urease accessory protein UreF">
    <location>
        <begin position="1"/>
        <end position="224"/>
    </location>
</feature>
<comment type="function">
    <text evidence="1">Required for maturation of urease via the functional incorporation of the urease nickel metallocenter.</text>
</comment>
<comment type="subunit">
    <text evidence="1">UreD, UreF and UreG form a complex that acts as a GTP-hydrolysis-dependent molecular chaperone, activating the urease apoprotein by helping to assemble the nickel containing metallocenter of UreC. The UreE protein probably delivers the nickel.</text>
</comment>
<comment type="subcellular location">
    <subcellularLocation>
        <location evidence="1">Cytoplasm</location>
    </subcellularLocation>
</comment>
<comment type="similarity">
    <text evidence="1">Belongs to the UreF family.</text>
</comment>
<proteinExistence type="inferred from homology"/>
<reference key="1">
    <citation type="journal article" date="2006" name="Appl. Environ. Microbiol.">
        <title>Complete genome sequence of the marine, chemolithoautotrophic, ammonia-oxidizing bacterium Nitrosococcus oceani ATCC 19707.</title>
        <authorList>
            <person name="Klotz M.G."/>
            <person name="Arp D.J."/>
            <person name="Chain P.S.G."/>
            <person name="El-Sheikh A.F."/>
            <person name="Hauser L.J."/>
            <person name="Hommes N.G."/>
            <person name="Larimer F.W."/>
            <person name="Malfatti S.A."/>
            <person name="Norton J.M."/>
            <person name="Poret-Peterson A.T."/>
            <person name="Vergez L.M."/>
            <person name="Ward B.B."/>
        </authorList>
    </citation>
    <scope>NUCLEOTIDE SEQUENCE [LARGE SCALE GENOMIC DNA]</scope>
    <source>
        <strain>ATCC 19707 / BCRC 17464 / JCM 30415 / NCIMB 11848 / C-107</strain>
    </source>
</reference>
<dbReference type="EMBL" id="CP000127">
    <property type="protein sequence ID" value="ABA59324.1"/>
    <property type="molecule type" value="Genomic_DNA"/>
</dbReference>
<dbReference type="RefSeq" id="WP_002814063.1">
    <property type="nucleotide sequence ID" value="NC_007484.1"/>
</dbReference>
<dbReference type="SMR" id="Q3J772"/>
<dbReference type="STRING" id="323261.Noc_2878"/>
<dbReference type="KEGG" id="noc:Noc_2878"/>
<dbReference type="eggNOG" id="COG0830">
    <property type="taxonomic scope" value="Bacteria"/>
</dbReference>
<dbReference type="HOGENOM" id="CLU_049215_2_1_6"/>
<dbReference type="InParanoid" id="Q3J772"/>
<dbReference type="Proteomes" id="UP000006838">
    <property type="component" value="Chromosome"/>
</dbReference>
<dbReference type="GO" id="GO:0005737">
    <property type="term" value="C:cytoplasm"/>
    <property type="evidence" value="ECO:0007669"/>
    <property type="project" value="UniProtKB-SubCell"/>
</dbReference>
<dbReference type="GO" id="GO:0016151">
    <property type="term" value="F:nickel cation binding"/>
    <property type="evidence" value="ECO:0007669"/>
    <property type="project" value="UniProtKB-UniRule"/>
</dbReference>
<dbReference type="Gene3D" id="1.10.4190.10">
    <property type="entry name" value="Urease accessory protein UreF"/>
    <property type="match status" value="1"/>
</dbReference>
<dbReference type="HAMAP" id="MF_01385">
    <property type="entry name" value="UreF"/>
    <property type="match status" value="1"/>
</dbReference>
<dbReference type="InterPro" id="IPR002639">
    <property type="entry name" value="UreF"/>
</dbReference>
<dbReference type="InterPro" id="IPR038277">
    <property type="entry name" value="UreF_sf"/>
</dbReference>
<dbReference type="PANTHER" id="PTHR33620">
    <property type="entry name" value="UREASE ACCESSORY PROTEIN F"/>
    <property type="match status" value="1"/>
</dbReference>
<dbReference type="PANTHER" id="PTHR33620:SF1">
    <property type="entry name" value="UREASE ACCESSORY PROTEIN F"/>
    <property type="match status" value="1"/>
</dbReference>
<dbReference type="Pfam" id="PF01730">
    <property type="entry name" value="UreF"/>
    <property type="match status" value="1"/>
</dbReference>
<dbReference type="PIRSF" id="PIRSF009467">
    <property type="entry name" value="Ureas_acces_UreF"/>
    <property type="match status" value="1"/>
</dbReference>
<gene>
    <name evidence="1" type="primary">ureF</name>
    <name type="ordered locus">Noc_2878</name>
</gene>
<protein>
    <recommendedName>
        <fullName evidence="1">Urease accessory protein UreF</fullName>
    </recommendedName>
</protein>
<evidence type="ECO:0000255" key="1">
    <source>
        <dbReference type="HAMAP-Rule" id="MF_01385"/>
    </source>
</evidence>
<accession>Q3J772</accession>
<organism>
    <name type="scientific">Nitrosococcus oceani (strain ATCC 19707 / BCRC 17464 / JCM 30415 / NCIMB 11848 / C-107)</name>
    <dbReference type="NCBI Taxonomy" id="323261"/>
    <lineage>
        <taxon>Bacteria</taxon>
        <taxon>Pseudomonadati</taxon>
        <taxon>Pseudomonadota</taxon>
        <taxon>Gammaproteobacteria</taxon>
        <taxon>Chromatiales</taxon>
        <taxon>Chromatiaceae</taxon>
        <taxon>Nitrosococcus</taxon>
    </lineage>
</organism>